<sequence>MEDDFKHLVRISRKDVDGNKTIEQALTEIKGVGISLSTTMCRTLDLDSEAQIGYIADEDVLKIEEILENPQKFNIPNWMLNRREDYETGENIHLIESDLDMTLRDDLNRMKKTRSYKGRRHEAGLPVRGQRTKSTFRNSSSVGVKRS</sequence>
<evidence type="ECO:0000255" key="1">
    <source>
        <dbReference type="HAMAP-Rule" id="MF_01315"/>
    </source>
</evidence>
<evidence type="ECO:0000256" key="2">
    <source>
        <dbReference type="SAM" id="MobiDB-lite"/>
    </source>
</evidence>
<evidence type="ECO:0000305" key="3"/>
<comment type="function">
    <text evidence="1">Located at the top of the head of the 30S subunit, it contacts several helices of the 16S rRNA. In the 70S ribosome it contacts the 23S rRNA (bridge B1a) and protein L5 of the 50S subunit (bridge B1b), connecting the 2 subunits; these bridges are implicated in subunit movement.</text>
</comment>
<comment type="subunit">
    <text evidence="1">Part of the 30S ribosomal subunit. Forms a loose heterodimer with protein S19. Forms two bridges to the 50S subunit in the 70S ribosome.</text>
</comment>
<comment type="similarity">
    <text evidence="1">Belongs to the universal ribosomal protein uS13 family.</text>
</comment>
<proteinExistence type="inferred from homology"/>
<keyword id="KW-0687">Ribonucleoprotein</keyword>
<keyword id="KW-0689">Ribosomal protein</keyword>
<keyword id="KW-0694">RNA-binding</keyword>
<keyword id="KW-0699">rRNA-binding</keyword>
<protein>
    <recommendedName>
        <fullName evidence="1">Small ribosomal subunit protein uS13</fullName>
    </recommendedName>
    <alternativeName>
        <fullName evidence="3">30S ribosomal protein S13</fullName>
    </alternativeName>
</protein>
<accession>A5UN52</accession>
<dbReference type="EMBL" id="CP000678">
    <property type="protein sequence ID" value="ABQ87630.1"/>
    <property type="molecule type" value="Genomic_DNA"/>
</dbReference>
<dbReference type="RefSeq" id="WP_004033260.1">
    <property type="nucleotide sequence ID" value="NZ_CP117965.1"/>
</dbReference>
<dbReference type="SMR" id="A5UN52"/>
<dbReference type="STRING" id="420247.Msm_1425"/>
<dbReference type="EnsemblBacteria" id="ABQ87630">
    <property type="protein sequence ID" value="ABQ87630"/>
    <property type="gene ID" value="Msm_1425"/>
</dbReference>
<dbReference type="KEGG" id="msi:Msm_1425"/>
<dbReference type="PATRIC" id="fig|420247.28.peg.1419"/>
<dbReference type="eggNOG" id="arCOG01722">
    <property type="taxonomic scope" value="Archaea"/>
</dbReference>
<dbReference type="HOGENOM" id="CLU_103849_0_1_2"/>
<dbReference type="Proteomes" id="UP000001992">
    <property type="component" value="Chromosome"/>
</dbReference>
<dbReference type="GO" id="GO:0005829">
    <property type="term" value="C:cytosol"/>
    <property type="evidence" value="ECO:0007669"/>
    <property type="project" value="TreeGrafter"/>
</dbReference>
<dbReference type="GO" id="GO:0015935">
    <property type="term" value="C:small ribosomal subunit"/>
    <property type="evidence" value="ECO:0007669"/>
    <property type="project" value="TreeGrafter"/>
</dbReference>
<dbReference type="GO" id="GO:0019843">
    <property type="term" value="F:rRNA binding"/>
    <property type="evidence" value="ECO:0007669"/>
    <property type="project" value="UniProtKB-UniRule"/>
</dbReference>
<dbReference type="GO" id="GO:0003735">
    <property type="term" value="F:structural constituent of ribosome"/>
    <property type="evidence" value="ECO:0007669"/>
    <property type="project" value="InterPro"/>
</dbReference>
<dbReference type="GO" id="GO:0006412">
    <property type="term" value="P:translation"/>
    <property type="evidence" value="ECO:0007669"/>
    <property type="project" value="UniProtKB-UniRule"/>
</dbReference>
<dbReference type="FunFam" id="4.10.910.10:FF:000002">
    <property type="entry name" value="40S ribosomal protein S18"/>
    <property type="match status" value="1"/>
</dbReference>
<dbReference type="Gene3D" id="1.10.8.50">
    <property type="match status" value="1"/>
</dbReference>
<dbReference type="Gene3D" id="4.10.910.10">
    <property type="entry name" value="30s ribosomal protein s13, domain 2"/>
    <property type="match status" value="1"/>
</dbReference>
<dbReference type="HAMAP" id="MF_01315">
    <property type="entry name" value="Ribosomal_uS13"/>
    <property type="match status" value="1"/>
</dbReference>
<dbReference type="InterPro" id="IPR027437">
    <property type="entry name" value="Rbsml_uS13_C"/>
</dbReference>
<dbReference type="InterPro" id="IPR001892">
    <property type="entry name" value="Ribosomal_uS13"/>
</dbReference>
<dbReference type="InterPro" id="IPR010979">
    <property type="entry name" value="Ribosomal_uS13-like_H2TH"/>
</dbReference>
<dbReference type="InterPro" id="IPR019977">
    <property type="entry name" value="Ribosomal_uS13_archaeal"/>
</dbReference>
<dbReference type="InterPro" id="IPR018269">
    <property type="entry name" value="Ribosomal_uS13_CS"/>
</dbReference>
<dbReference type="NCBIfam" id="NF003140">
    <property type="entry name" value="PRK04053.1"/>
    <property type="match status" value="1"/>
</dbReference>
<dbReference type="NCBIfam" id="TIGR03629">
    <property type="entry name" value="uS13_arch"/>
    <property type="match status" value="1"/>
</dbReference>
<dbReference type="PANTHER" id="PTHR10871">
    <property type="entry name" value="30S RIBOSOMAL PROTEIN S13/40S RIBOSOMAL PROTEIN S18"/>
    <property type="match status" value="1"/>
</dbReference>
<dbReference type="PANTHER" id="PTHR10871:SF3">
    <property type="entry name" value="SMALL RIBOSOMAL SUBUNIT PROTEIN US13"/>
    <property type="match status" value="1"/>
</dbReference>
<dbReference type="Pfam" id="PF00416">
    <property type="entry name" value="Ribosomal_S13"/>
    <property type="match status" value="1"/>
</dbReference>
<dbReference type="PIRSF" id="PIRSF002134">
    <property type="entry name" value="Ribosomal_S13"/>
    <property type="match status" value="1"/>
</dbReference>
<dbReference type="SUPFAM" id="SSF46946">
    <property type="entry name" value="S13-like H2TH domain"/>
    <property type="match status" value="1"/>
</dbReference>
<dbReference type="PROSITE" id="PS00646">
    <property type="entry name" value="RIBOSOMAL_S13_1"/>
    <property type="match status" value="1"/>
</dbReference>
<dbReference type="PROSITE" id="PS50159">
    <property type="entry name" value="RIBOSOMAL_S13_2"/>
    <property type="match status" value="1"/>
</dbReference>
<name>RS13_METS3</name>
<gene>
    <name evidence="1" type="primary">rps13</name>
    <name type="ordered locus">Msm_1425</name>
</gene>
<feature type="chain" id="PRO_0000306752" description="Small ribosomal subunit protein uS13">
    <location>
        <begin position="1"/>
        <end position="147"/>
    </location>
</feature>
<feature type="region of interest" description="Disordered" evidence="2">
    <location>
        <begin position="115"/>
        <end position="147"/>
    </location>
</feature>
<feature type="compositionally biased region" description="Polar residues" evidence="2">
    <location>
        <begin position="132"/>
        <end position="147"/>
    </location>
</feature>
<reference key="1">
    <citation type="journal article" date="2007" name="Proc. Natl. Acad. Sci. U.S.A.">
        <title>Genomic and metabolic adaptations of Methanobrevibacter smithii to the human gut.</title>
        <authorList>
            <person name="Samuel B.S."/>
            <person name="Hansen E.E."/>
            <person name="Manchester J.K."/>
            <person name="Coutinho P.M."/>
            <person name="Henrissat B."/>
            <person name="Fulton R."/>
            <person name="Latreille P."/>
            <person name="Kim K."/>
            <person name="Wilson R.K."/>
            <person name="Gordon J.I."/>
        </authorList>
    </citation>
    <scope>NUCLEOTIDE SEQUENCE [LARGE SCALE GENOMIC DNA]</scope>
    <source>
        <strain>ATCC 35061 / DSM 861 / OCM 144 / PS</strain>
    </source>
</reference>
<organism>
    <name type="scientific">Methanobrevibacter smithii (strain ATCC 35061 / DSM 861 / OCM 144 / PS)</name>
    <dbReference type="NCBI Taxonomy" id="420247"/>
    <lineage>
        <taxon>Archaea</taxon>
        <taxon>Methanobacteriati</taxon>
        <taxon>Methanobacteriota</taxon>
        <taxon>Methanomada group</taxon>
        <taxon>Methanobacteria</taxon>
        <taxon>Methanobacteriales</taxon>
        <taxon>Methanobacteriaceae</taxon>
        <taxon>Methanobrevibacter</taxon>
    </lineage>
</organism>